<name>PCYA_PROMM</name>
<proteinExistence type="inferred from homology"/>
<organism>
    <name type="scientific">Prochlorococcus marinus (strain MIT 9313)</name>
    <dbReference type="NCBI Taxonomy" id="74547"/>
    <lineage>
        <taxon>Bacteria</taxon>
        <taxon>Bacillati</taxon>
        <taxon>Cyanobacteriota</taxon>
        <taxon>Cyanophyceae</taxon>
        <taxon>Synechococcales</taxon>
        <taxon>Prochlorococcaceae</taxon>
        <taxon>Prochlorococcus</taxon>
    </lineage>
</organism>
<sequence length="264" mass="29109">MERVRGACQSPILILLAIVLPFPSTSGPAIHPLIESLAARIRQRRAQLPELSPFALDSVMESISGQLDGEELLISNELHRCRGMRKLHLEIARLGGGLQVLHCVFFPDPRFDLPIFGADIVAGPAGISAAIVDLSPVGLTMPEALLHGLESLPIPAFQQVRELPEWGSIFSPFVQFIRPASSQEESWFVDLADGYLKALISSVIDATPDASDAASTIQRHKSQLSYCIQQKRNDKTRGVLEKAFNPQWADRYIEEILFEDPPPL</sequence>
<reference key="1">
    <citation type="journal article" date="2003" name="Nature">
        <title>Genome divergence in two Prochlorococcus ecotypes reflects oceanic niche differentiation.</title>
        <authorList>
            <person name="Rocap G."/>
            <person name="Larimer F.W."/>
            <person name="Lamerdin J.E."/>
            <person name="Malfatti S."/>
            <person name="Chain P."/>
            <person name="Ahlgren N.A."/>
            <person name="Arellano A."/>
            <person name="Coleman M."/>
            <person name="Hauser L."/>
            <person name="Hess W.R."/>
            <person name="Johnson Z.I."/>
            <person name="Land M.L."/>
            <person name="Lindell D."/>
            <person name="Post A.F."/>
            <person name="Regala W."/>
            <person name="Shah M."/>
            <person name="Shaw S.L."/>
            <person name="Steglich C."/>
            <person name="Sullivan M.B."/>
            <person name="Ting C.S."/>
            <person name="Tolonen A."/>
            <person name="Webb E.A."/>
            <person name="Zinser E.R."/>
            <person name="Chisholm S.W."/>
        </authorList>
    </citation>
    <scope>NUCLEOTIDE SEQUENCE [LARGE SCALE GENOMIC DNA]</scope>
    <source>
        <strain>MIT 9313</strain>
    </source>
</reference>
<dbReference type="EC" id="1.3.7.5"/>
<dbReference type="EMBL" id="BX548175">
    <property type="protein sequence ID" value="CAE20765.1"/>
    <property type="molecule type" value="Genomic_DNA"/>
</dbReference>
<dbReference type="RefSeq" id="WP_011129969.1">
    <property type="nucleotide sequence ID" value="NC_005071.1"/>
</dbReference>
<dbReference type="SMR" id="Q7V7Y8"/>
<dbReference type="KEGG" id="pmt:PMT_0590"/>
<dbReference type="eggNOG" id="ENOG502Z7RN">
    <property type="taxonomic scope" value="Bacteria"/>
</dbReference>
<dbReference type="HOGENOM" id="CLU_074224_0_0_3"/>
<dbReference type="OrthoDB" id="581340at2"/>
<dbReference type="Proteomes" id="UP000001423">
    <property type="component" value="Chromosome"/>
</dbReference>
<dbReference type="GO" id="GO:0050897">
    <property type="term" value="F:cobalt ion binding"/>
    <property type="evidence" value="ECO:0007669"/>
    <property type="project" value="InterPro"/>
</dbReference>
<dbReference type="GO" id="GO:0050620">
    <property type="term" value="F:phycocyanobilin:ferredoxin oxidoreductase activity"/>
    <property type="evidence" value="ECO:0007669"/>
    <property type="project" value="UniProtKB-UniRule"/>
</dbReference>
<dbReference type="GO" id="GO:0010024">
    <property type="term" value="P:phytochromobilin biosynthetic process"/>
    <property type="evidence" value="ECO:0007669"/>
    <property type="project" value="InterPro"/>
</dbReference>
<dbReference type="Gene3D" id="3.40.1500.20">
    <property type="match status" value="1"/>
</dbReference>
<dbReference type="HAMAP" id="MF_00618">
    <property type="entry name" value="Ferredoxin_bilin_red"/>
    <property type="match status" value="1"/>
</dbReference>
<dbReference type="InterPro" id="IPR009249">
    <property type="entry name" value="Ferredoxin-dep_bilin_Rdtase"/>
</dbReference>
<dbReference type="InterPro" id="IPR022870">
    <property type="entry name" value="Ferredoxin_bilin_OxRdtase"/>
</dbReference>
<dbReference type="NCBIfam" id="NF002760">
    <property type="entry name" value="PRK02816.1"/>
    <property type="match status" value="1"/>
</dbReference>
<dbReference type="PANTHER" id="PTHR34557">
    <property type="entry name" value="PHYTOCHROMOBILIN:FERREDOXIN OXIDOREDUCTASE, CHLOROPLASTIC"/>
    <property type="match status" value="1"/>
</dbReference>
<dbReference type="PANTHER" id="PTHR34557:SF1">
    <property type="entry name" value="PHYTOCHROMOBILIN:FERREDOXIN OXIDOREDUCTASE, CHLOROPLASTIC"/>
    <property type="match status" value="1"/>
</dbReference>
<dbReference type="Pfam" id="PF05996">
    <property type="entry name" value="Fe_bilin_red"/>
    <property type="match status" value="1"/>
</dbReference>
<gene>
    <name type="primary">pcyA</name>
    <name type="ordered locus">PMT_0590</name>
</gene>
<protein>
    <recommendedName>
        <fullName>Phycocyanobilin:ferredoxin oxidoreductase</fullName>
        <ecNumber>1.3.7.5</ecNumber>
    </recommendedName>
</protein>
<feature type="chain" id="PRO_0000216742" description="Phycocyanobilin:ferredoxin oxidoreductase">
    <location>
        <begin position="1"/>
        <end position="264"/>
    </location>
</feature>
<keyword id="KW-0560">Oxidoreductase</keyword>
<keyword id="KW-1185">Reference proteome</keyword>
<comment type="function">
    <text evidence="1">Catalyzes the four-electron reduction of biliverdin IX-alpha (2-electron reduction at both the A and D rings); the reaction proceeds via an isolatable 2-electron intermediate, 181,182-dihydrobiliverdin.</text>
</comment>
<comment type="catalytic activity">
    <reaction>
        <text>(2R,3Z)-phycocyanobilin + 4 oxidized [2Fe-2S]-[ferredoxin] = biliverdin IXalpha + 4 reduced [2Fe-2S]-[ferredoxin] + 4 H(+)</text>
        <dbReference type="Rhea" id="RHEA:15309"/>
        <dbReference type="Rhea" id="RHEA-COMP:10000"/>
        <dbReference type="Rhea" id="RHEA-COMP:10001"/>
        <dbReference type="ChEBI" id="CHEBI:15378"/>
        <dbReference type="ChEBI" id="CHEBI:33737"/>
        <dbReference type="ChEBI" id="CHEBI:33738"/>
        <dbReference type="ChEBI" id="CHEBI:57437"/>
        <dbReference type="ChEBI" id="CHEBI:57991"/>
        <dbReference type="EC" id="1.3.7.5"/>
    </reaction>
</comment>
<comment type="similarity">
    <text evidence="2">Belongs to the HY2 family.</text>
</comment>
<evidence type="ECO:0000250" key="1"/>
<evidence type="ECO:0000305" key="2"/>
<accession>Q7V7Y8</accession>